<evidence type="ECO:0000255" key="1">
    <source>
        <dbReference type="HAMAP-Rule" id="MF_01394"/>
    </source>
</evidence>
<proteinExistence type="inferred from homology"/>
<comment type="function">
    <text evidence="1">NDH-1 shuttles electrons from NADH, via FMN and iron-sulfur (Fe-S) centers, to quinones in the respiratory chain. The immediate electron acceptor for the enzyme in this species is believed to be ubiquinone. Couples the redox reaction to proton translocation (for every two electrons transferred, four hydrogen ions are translocated across the cytoplasmic membrane), and thus conserves the redox energy in a proton gradient.</text>
</comment>
<comment type="catalytic activity">
    <reaction evidence="1">
        <text>a quinone + NADH + 5 H(+)(in) = a quinol + NAD(+) + 4 H(+)(out)</text>
        <dbReference type="Rhea" id="RHEA:57888"/>
        <dbReference type="ChEBI" id="CHEBI:15378"/>
        <dbReference type="ChEBI" id="CHEBI:24646"/>
        <dbReference type="ChEBI" id="CHEBI:57540"/>
        <dbReference type="ChEBI" id="CHEBI:57945"/>
        <dbReference type="ChEBI" id="CHEBI:132124"/>
    </reaction>
</comment>
<comment type="subunit">
    <text evidence="1">NDH-1 is composed of 13 different subunits. Subunits NuoA, H, J, K, L, M, N constitute the membrane sector of the complex.</text>
</comment>
<comment type="subcellular location">
    <subcellularLocation>
        <location evidence="1">Cell inner membrane</location>
        <topology evidence="1">Multi-pass membrane protein</topology>
    </subcellularLocation>
</comment>
<comment type="similarity">
    <text evidence="1">Belongs to the complex I subunit 3 family.</text>
</comment>
<gene>
    <name evidence="1" type="primary">nuoA</name>
    <name type="ordered locus">PP_4119</name>
</gene>
<name>NUOA_PSEPK</name>
<accession>Q88FH7</accession>
<keyword id="KW-0997">Cell inner membrane</keyword>
<keyword id="KW-1003">Cell membrane</keyword>
<keyword id="KW-0472">Membrane</keyword>
<keyword id="KW-0520">NAD</keyword>
<keyword id="KW-0874">Quinone</keyword>
<keyword id="KW-1185">Reference proteome</keyword>
<keyword id="KW-1278">Translocase</keyword>
<keyword id="KW-0812">Transmembrane</keyword>
<keyword id="KW-1133">Transmembrane helix</keyword>
<keyword id="KW-0813">Transport</keyword>
<keyword id="KW-0830">Ubiquinone</keyword>
<organism>
    <name type="scientific">Pseudomonas putida (strain ATCC 47054 / DSM 6125 / CFBP 8728 / NCIMB 11950 / KT2440)</name>
    <dbReference type="NCBI Taxonomy" id="160488"/>
    <lineage>
        <taxon>Bacteria</taxon>
        <taxon>Pseudomonadati</taxon>
        <taxon>Pseudomonadota</taxon>
        <taxon>Gammaproteobacteria</taxon>
        <taxon>Pseudomonadales</taxon>
        <taxon>Pseudomonadaceae</taxon>
        <taxon>Pseudomonas</taxon>
    </lineage>
</organism>
<protein>
    <recommendedName>
        <fullName evidence="1">NADH-quinone oxidoreductase subunit A</fullName>
        <ecNumber evidence="1">7.1.1.-</ecNumber>
    </recommendedName>
    <alternativeName>
        <fullName evidence="1">NADH dehydrogenase I subunit A</fullName>
    </alternativeName>
    <alternativeName>
        <fullName evidence="1">NDH-1 subunit A</fullName>
    </alternativeName>
    <alternativeName>
        <fullName evidence="1">NUO1</fullName>
    </alternativeName>
</protein>
<dbReference type="EC" id="7.1.1.-" evidence="1"/>
<dbReference type="EMBL" id="AE015451">
    <property type="protein sequence ID" value="AAN69702.1"/>
    <property type="molecule type" value="Genomic_DNA"/>
</dbReference>
<dbReference type="RefSeq" id="NP_746238.1">
    <property type="nucleotide sequence ID" value="NC_002947.4"/>
</dbReference>
<dbReference type="RefSeq" id="WP_003251427.1">
    <property type="nucleotide sequence ID" value="NZ_CP169744.1"/>
</dbReference>
<dbReference type="SMR" id="Q88FH7"/>
<dbReference type="STRING" id="160488.PP_4119"/>
<dbReference type="PaxDb" id="160488-PP_4119"/>
<dbReference type="DNASU" id="1041621"/>
<dbReference type="KEGG" id="ppu:PP_4119"/>
<dbReference type="PATRIC" id="fig|160488.4.peg.4378"/>
<dbReference type="eggNOG" id="COG0838">
    <property type="taxonomic scope" value="Bacteria"/>
</dbReference>
<dbReference type="HOGENOM" id="CLU_119549_2_1_6"/>
<dbReference type="OrthoDB" id="9791970at2"/>
<dbReference type="PhylomeDB" id="Q88FH7"/>
<dbReference type="BioCyc" id="MetaCyc:G1G01-4386-MONOMER"/>
<dbReference type="BioCyc" id="PPUT160488:G1G01-4386-MONOMER"/>
<dbReference type="Proteomes" id="UP000000556">
    <property type="component" value="Chromosome"/>
</dbReference>
<dbReference type="GO" id="GO:0030964">
    <property type="term" value="C:NADH dehydrogenase complex"/>
    <property type="evidence" value="ECO:0007669"/>
    <property type="project" value="TreeGrafter"/>
</dbReference>
<dbReference type="GO" id="GO:0005886">
    <property type="term" value="C:plasma membrane"/>
    <property type="evidence" value="ECO:0007669"/>
    <property type="project" value="UniProtKB-SubCell"/>
</dbReference>
<dbReference type="GO" id="GO:0008137">
    <property type="term" value="F:NADH dehydrogenase (ubiquinone) activity"/>
    <property type="evidence" value="ECO:0007669"/>
    <property type="project" value="InterPro"/>
</dbReference>
<dbReference type="GO" id="GO:0050136">
    <property type="term" value="F:NADH:ubiquinone reductase (non-electrogenic) activity"/>
    <property type="evidence" value="ECO:0007669"/>
    <property type="project" value="UniProtKB-UniRule"/>
</dbReference>
<dbReference type="GO" id="GO:0048038">
    <property type="term" value="F:quinone binding"/>
    <property type="evidence" value="ECO:0007669"/>
    <property type="project" value="UniProtKB-KW"/>
</dbReference>
<dbReference type="FunFam" id="1.20.58.1610:FF:000003">
    <property type="entry name" value="NADH-quinone oxidoreductase subunit A"/>
    <property type="match status" value="1"/>
</dbReference>
<dbReference type="Gene3D" id="1.20.58.1610">
    <property type="entry name" value="NADH:ubiquinone/plastoquinone oxidoreductase, chain 3"/>
    <property type="match status" value="1"/>
</dbReference>
<dbReference type="HAMAP" id="MF_01394">
    <property type="entry name" value="NDH1_NuoA"/>
    <property type="match status" value="1"/>
</dbReference>
<dbReference type="InterPro" id="IPR023043">
    <property type="entry name" value="NAD(P)H_OxRDtase_bac/plastid"/>
</dbReference>
<dbReference type="InterPro" id="IPR000440">
    <property type="entry name" value="NADH_UbQ/plastoQ_OxRdtase_su3"/>
</dbReference>
<dbReference type="InterPro" id="IPR038430">
    <property type="entry name" value="NDAH_ubi_oxred_su3_sf"/>
</dbReference>
<dbReference type="PANTHER" id="PTHR11058:SF21">
    <property type="entry name" value="NADH-QUINONE OXIDOREDUCTASE SUBUNIT A"/>
    <property type="match status" value="1"/>
</dbReference>
<dbReference type="PANTHER" id="PTHR11058">
    <property type="entry name" value="NADH-UBIQUINONE OXIDOREDUCTASE CHAIN 3"/>
    <property type="match status" value="1"/>
</dbReference>
<dbReference type="Pfam" id="PF00507">
    <property type="entry name" value="Oxidored_q4"/>
    <property type="match status" value="1"/>
</dbReference>
<sequence>MSDSAGLIAHNWGFAIFLLGVVGLCAFMLGLSSLLGSKAWGRAKNEPFESGMLPVGSARLRLSAKFYLVAMLFVIFDIEALFLFAWSVSVRESGWTGFVEALVFIAILLAGLVYLWRVGALDWAPEGRRKRQAKLKQ</sequence>
<reference key="1">
    <citation type="journal article" date="2002" name="Environ. Microbiol.">
        <title>Complete genome sequence and comparative analysis of the metabolically versatile Pseudomonas putida KT2440.</title>
        <authorList>
            <person name="Nelson K.E."/>
            <person name="Weinel C."/>
            <person name="Paulsen I.T."/>
            <person name="Dodson R.J."/>
            <person name="Hilbert H."/>
            <person name="Martins dos Santos V.A.P."/>
            <person name="Fouts D.E."/>
            <person name="Gill S.R."/>
            <person name="Pop M."/>
            <person name="Holmes M."/>
            <person name="Brinkac L.M."/>
            <person name="Beanan M.J."/>
            <person name="DeBoy R.T."/>
            <person name="Daugherty S.C."/>
            <person name="Kolonay J.F."/>
            <person name="Madupu R."/>
            <person name="Nelson W.C."/>
            <person name="White O."/>
            <person name="Peterson J.D."/>
            <person name="Khouri H.M."/>
            <person name="Hance I."/>
            <person name="Chris Lee P."/>
            <person name="Holtzapple E.K."/>
            <person name="Scanlan D."/>
            <person name="Tran K."/>
            <person name="Moazzez A."/>
            <person name="Utterback T.R."/>
            <person name="Rizzo M."/>
            <person name="Lee K."/>
            <person name="Kosack D."/>
            <person name="Moestl D."/>
            <person name="Wedler H."/>
            <person name="Lauber J."/>
            <person name="Stjepandic D."/>
            <person name="Hoheisel J."/>
            <person name="Straetz M."/>
            <person name="Heim S."/>
            <person name="Kiewitz C."/>
            <person name="Eisen J.A."/>
            <person name="Timmis K.N."/>
            <person name="Duesterhoeft A."/>
            <person name="Tuemmler B."/>
            <person name="Fraser C.M."/>
        </authorList>
    </citation>
    <scope>NUCLEOTIDE SEQUENCE [LARGE SCALE GENOMIC DNA]</scope>
    <source>
        <strain>ATCC 47054 / DSM 6125 / CFBP 8728 / NCIMB 11950 / KT2440</strain>
    </source>
</reference>
<feature type="chain" id="PRO_0000362743" description="NADH-quinone oxidoreductase subunit A">
    <location>
        <begin position="1"/>
        <end position="137"/>
    </location>
</feature>
<feature type="transmembrane region" description="Helical" evidence="1">
    <location>
        <begin position="12"/>
        <end position="32"/>
    </location>
</feature>
<feature type="transmembrane region" description="Helical" evidence="1">
    <location>
        <begin position="66"/>
        <end position="86"/>
    </location>
</feature>
<feature type="transmembrane region" description="Helical" evidence="1">
    <location>
        <begin position="95"/>
        <end position="115"/>
    </location>
</feature>